<organism>
    <name type="scientific">Geobacter metallireducens (strain ATCC 53774 / DSM 7210 / GS-15)</name>
    <dbReference type="NCBI Taxonomy" id="269799"/>
    <lineage>
        <taxon>Bacteria</taxon>
        <taxon>Pseudomonadati</taxon>
        <taxon>Thermodesulfobacteriota</taxon>
        <taxon>Desulfuromonadia</taxon>
        <taxon>Geobacterales</taxon>
        <taxon>Geobacteraceae</taxon>
        <taxon>Geobacter</taxon>
    </lineage>
</organism>
<proteinExistence type="inferred from homology"/>
<comment type="function">
    <text evidence="1">Exhibits a very high intrinsic GTPase hydrolysis rate. Involved in the addition of a carboxymethylaminomethyl (cmnm) group at the wobble position (U34) of certain tRNAs, forming tRNA-cmnm(5)s(2)U34.</text>
</comment>
<comment type="cofactor">
    <cofactor evidence="1">
        <name>K(+)</name>
        <dbReference type="ChEBI" id="CHEBI:29103"/>
    </cofactor>
    <text evidence="1">Binds 1 potassium ion per subunit.</text>
</comment>
<comment type="subunit">
    <text evidence="1">Homodimer. Heterotetramer of two MnmE and two MnmG subunits.</text>
</comment>
<comment type="subcellular location">
    <subcellularLocation>
        <location evidence="1">Cytoplasm</location>
    </subcellularLocation>
</comment>
<comment type="similarity">
    <text evidence="1">Belongs to the TRAFAC class TrmE-Era-EngA-EngB-Septin-like GTPase superfamily. TrmE GTPase family.</text>
</comment>
<protein>
    <recommendedName>
        <fullName evidence="1">tRNA modification GTPase MnmE</fullName>
        <ecNumber evidence="1">3.6.-.-</ecNumber>
    </recommendedName>
</protein>
<gene>
    <name evidence="1" type="primary">mnmE</name>
    <name evidence="1" type="synonym">trmE</name>
    <name type="ordered locus">Gmet_3560</name>
</gene>
<feature type="chain" id="PRO_0000345789" description="tRNA modification GTPase MnmE">
    <location>
        <begin position="1"/>
        <end position="457"/>
    </location>
</feature>
<feature type="domain" description="TrmE-type G">
    <location>
        <begin position="221"/>
        <end position="377"/>
    </location>
</feature>
<feature type="binding site" evidence="1">
    <location>
        <position position="23"/>
    </location>
    <ligand>
        <name>(6S)-5-formyl-5,6,7,8-tetrahydrofolate</name>
        <dbReference type="ChEBI" id="CHEBI:57457"/>
    </ligand>
</feature>
<feature type="binding site" evidence="1">
    <location>
        <position position="86"/>
    </location>
    <ligand>
        <name>(6S)-5-formyl-5,6,7,8-tetrahydrofolate</name>
        <dbReference type="ChEBI" id="CHEBI:57457"/>
    </ligand>
</feature>
<feature type="binding site" evidence="1">
    <location>
        <position position="125"/>
    </location>
    <ligand>
        <name>(6S)-5-formyl-5,6,7,8-tetrahydrofolate</name>
        <dbReference type="ChEBI" id="CHEBI:57457"/>
    </ligand>
</feature>
<feature type="binding site" evidence="1">
    <location>
        <begin position="231"/>
        <end position="236"/>
    </location>
    <ligand>
        <name>GTP</name>
        <dbReference type="ChEBI" id="CHEBI:37565"/>
    </ligand>
</feature>
<feature type="binding site" evidence="1">
    <location>
        <position position="231"/>
    </location>
    <ligand>
        <name>K(+)</name>
        <dbReference type="ChEBI" id="CHEBI:29103"/>
    </ligand>
</feature>
<feature type="binding site" evidence="1">
    <location>
        <position position="235"/>
    </location>
    <ligand>
        <name>Mg(2+)</name>
        <dbReference type="ChEBI" id="CHEBI:18420"/>
    </ligand>
</feature>
<feature type="binding site" evidence="1">
    <location>
        <begin position="250"/>
        <end position="256"/>
    </location>
    <ligand>
        <name>GTP</name>
        <dbReference type="ChEBI" id="CHEBI:37565"/>
    </ligand>
</feature>
<feature type="binding site" evidence="1">
    <location>
        <position position="250"/>
    </location>
    <ligand>
        <name>K(+)</name>
        <dbReference type="ChEBI" id="CHEBI:29103"/>
    </ligand>
</feature>
<feature type="binding site" evidence="1">
    <location>
        <position position="252"/>
    </location>
    <ligand>
        <name>K(+)</name>
        <dbReference type="ChEBI" id="CHEBI:29103"/>
    </ligand>
</feature>
<feature type="binding site" evidence="1">
    <location>
        <position position="255"/>
    </location>
    <ligand>
        <name>K(+)</name>
        <dbReference type="ChEBI" id="CHEBI:29103"/>
    </ligand>
</feature>
<feature type="binding site" evidence="1">
    <location>
        <position position="256"/>
    </location>
    <ligand>
        <name>Mg(2+)</name>
        <dbReference type="ChEBI" id="CHEBI:18420"/>
    </ligand>
</feature>
<feature type="binding site" evidence="1">
    <location>
        <begin position="275"/>
        <end position="278"/>
    </location>
    <ligand>
        <name>GTP</name>
        <dbReference type="ChEBI" id="CHEBI:37565"/>
    </ligand>
</feature>
<feature type="binding site" evidence="1">
    <location>
        <position position="457"/>
    </location>
    <ligand>
        <name>(6S)-5-formyl-5,6,7,8-tetrahydrofolate</name>
        <dbReference type="ChEBI" id="CHEBI:57457"/>
    </ligand>
</feature>
<dbReference type="EC" id="3.6.-.-" evidence="1"/>
<dbReference type="EMBL" id="CP000148">
    <property type="protein sequence ID" value="ABB33765.1"/>
    <property type="molecule type" value="Genomic_DNA"/>
</dbReference>
<dbReference type="RefSeq" id="WP_004513716.1">
    <property type="nucleotide sequence ID" value="NC_007517.1"/>
</dbReference>
<dbReference type="SMR" id="Q39PQ9"/>
<dbReference type="STRING" id="269799.Gmet_3560"/>
<dbReference type="KEGG" id="gme:Gmet_3560"/>
<dbReference type="eggNOG" id="COG0486">
    <property type="taxonomic scope" value="Bacteria"/>
</dbReference>
<dbReference type="HOGENOM" id="CLU_019624_4_1_7"/>
<dbReference type="Proteomes" id="UP000007073">
    <property type="component" value="Chromosome"/>
</dbReference>
<dbReference type="GO" id="GO:0005829">
    <property type="term" value="C:cytosol"/>
    <property type="evidence" value="ECO:0007669"/>
    <property type="project" value="TreeGrafter"/>
</dbReference>
<dbReference type="GO" id="GO:0005525">
    <property type="term" value="F:GTP binding"/>
    <property type="evidence" value="ECO:0007669"/>
    <property type="project" value="UniProtKB-UniRule"/>
</dbReference>
<dbReference type="GO" id="GO:0003924">
    <property type="term" value="F:GTPase activity"/>
    <property type="evidence" value="ECO:0007669"/>
    <property type="project" value="UniProtKB-UniRule"/>
</dbReference>
<dbReference type="GO" id="GO:0046872">
    <property type="term" value="F:metal ion binding"/>
    <property type="evidence" value="ECO:0007669"/>
    <property type="project" value="UniProtKB-KW"/>
</dbReference>
<dbReference type="GO" id="GO:0030488">
    <property type="term" value="P:tRNA methylation"/>
    <property type="evidence" value="ECO:0007669"/>
    <property type="project" value="TreeGrafter"/>
</dbReference>
<dbReference type="GO" id="GO:0002098">
    <property type="term" value="P:tRNA wobble uridine modification"/>
    <property type="evidence" value="ECO:0007669"/>
    <property type="project" value="TreeGrafter"/>
</dbReference>
<dbReference type="CDD" id="cd04164">
    <property type="entry name" value="trmE"/>
    <property type="match status" value="1"/>
</dbReference>
<dbReference type="CDD" id="cd14858">
    <property type="entry name" value="TrmE_N"/>
    <property type="match status" value="1"/>
</dbReference>
<dbReference type="FunFam" id="3.30.1360.120:FF:000003">
    <property type="entry name" value="tRNA modification GTPase MnmE"/>
    <property type="match status" value="1"/>
</dbReference>
<dbReference type="FunFam" id="3.40.50.300:FF:000494">
    <property type="entry name" value="tRNA modification GTPase MnmE"/>
    <property type="match status" value="1"/>
</dbReference>
<dbReference type="Gene3D" id="3.40.50.300">
    <property type="entry name" value="P-loop containing nucleotide triphosphate hydrolases"/>
    <property type="match status" value="1"/>
</dbReference>
<dbReference type="Gene3D" id="3.30.1360.120">
    <property type="entry name" value="Probable tRNA modification gtpase trme, domain 1"/>
    <property type="match status" value="1"/>
</dbReference>
<dbReference type="Gene3D" id="1.20.120.430">
    <property type="entry name" value="tRNA modification GTPase MnmE domain 2"/>
    <property type="match status" value="1"/>
</dbReference>
<dbReference type="HAMAP" id="MF_00379">
    <property type="entry name" value="GTPase_MnmE"/>
    <property type="match status" value="1"/>
</dbReference>
<dbReference type="InterPro" id="IPR031168">
    <property type="entry name" value="G_TrmE"/>
</dbReference>
<dbReference type="InterPro" id="IPR006073">
    <property type="entry name" value="GTP-bd"/>
</dbReference>
<dbReference type="InterPro" id="IPR018948">
    <property type="entry name" value="GTP-bd_TrmE_N"/>
</dbReference>
<dbReference type="InterPro" id="IPR004520">
    <property type="entry name" value="GTPase_MnmE"/>
</dbReference>
<dbReference type="InterPro" id="IPR027368">
    <property type="entry name" value="MnmE_dom2"/>
</dbReference>
<dbReference type="InterPro" id="IPR025867">
    <property type="entry name" value="MnmE_helical"/>
</dbReference>
<dbReference type="InterPro" id="IPR027417">
    <property type="entry name" value="P-loop_NTPase"/>
</dbReference>
<dbReference type="InterPro" id="IPR005225">
    <property type="entry name" value="Small_GTP-bd"/>
</dbReference>
<dbReference type="InterPro" id="IPR027266">
    <property type="entry name" value="TrmE/GcvT_dom1"/>
</dbReference>
<dbReference type="NCBIfam" id="TIGR00450">
    <property type="entry name" value="mnmE_trmE_thdF"/>
    <property type="match status" value="1"/>
</dbReference>
<dbReference type="NCBIfam" id="NF003661">
    <property type="entry name" value="PRK05291.1-3"/>
    <property type="match status" value="1"/>
</dbReference>
<dbReference type="NCBIfam" id="TIGR00231">
    <property type="entry name" value="small_GTP"/>
    <property type="match status" value="1"/>
</dbReference>
<dbReference type="PANTHER" id="PTHR42714">
    <property type="entry name" value="TRNA MODIFICATION GTPASE GTPBP3"/>
    <property type="match status" value="1"/>
</dbReference>
<dbReference type="PANTHER" id="PTHR42714:SF2">
    <property type="entry name" value="TRNA MODIFICATION GTPASE GTPBP3, MITOCHONDRIAL"/>
    <property type="match status" value="1"/>
</dbReference>
<dbReference type="Pfam" id="PF01926">
    <property type="entry name" value="MMR_HSR1"/>
    <property type="match status" value="1"/>
</dbReference>
<dbReference type="Pfam" id="PF12631">
    <property type="entry name" value="MnmE_helical"/>
    <property type="match status" value="1"/>
</dbReference>
<dbReference type="Pfam" id="PF10396">
    <property type="entry name" value="TrmE_N"/>
    <property type="match status" value="1"/>
</dbReference>
<dbReference type="PRINTS" id="PR00326">
    <property type="entry name" value="GTP1OBG"/>
</dbReference>
<dbReference type="SUPFAM" id="SSF52540">
    <property type="entry name" value="P-loop containing nucleoside triphosphate hydrolases"/>
    <property type="match status" value="1"/>
</dbReference>
<dbReference type="PROSITE" id="PS51709">
    <property type="entry name" value="G_TRME"/>
    <property type="match status" value="1"/>
</dbReference>
<evidence type="ECO:0000255" key="1">
    <source>
        <dbReference type="HAMAP-Rule" id="MF_00379"/>
    </source>
</evidence>
<sequence>MYLEDTIAAIGTPVGEGGIGIIRVSGPDVPAIARRIVRRVNENGDFVSHRFYYGTVVDPESRDTVDEVMAVLMRAPRSFTREDVLEIQCHGGYLVTRRVLDAVLQCGARPAEPGEFTRRAFLNGRIDLVQAEAVIDVIRSKTEAALNLAQHQREGRLSERLKAVQGCLRHSLALVEAFIDFPDDEVDPASRVEIEAKAREASGRIEELLEGFDEGRVLRDGVSVLIAGKPNVGKSSLLNTLLQEKRAIVTSVPGTTRDIIEEVVNVRGLPLRMLDTAGIRETEDVVEQEGVRLTLEKIPQADLILFVLDGSRPFDDDDRMILAALAERRVIVVTNKSDLPVTLRIPGELEGVHTVAISTATGAGIDDLREAVFETFIHGRAIDSREYVALSQTRHRDALVKARGRIAVFFANLAAGNDLEILAVDLRDALDAVGEVTGETTPDDILELIFQRFCIGK</sequence>
<accession>Q39PQ9</accession>
<keyword id="KW-0963">Cytoplasm</keyword>
<keyword id="KW-0342">GTP-binding</keyword>
<keyword id="KW-0378">Hydrolase</keyword>
<keyword id="KW-0460">Magnesium</keyword>
<keyword id="KW-0479">Metal-binding</keyword>
<keyword id="KW-0547">Nucleotide-binding</keyword>
<keyword id="KW-0630">Potassium</keyword>
<keyword id="KW-1185">Reference proteome</keyword>
<keyword id="KW-0819">tRNA processing</keyword>
<reference key="1">
    <citation type="journal article" date="2009" name="BMC Microbiol.">
        <title>The genome sequence of Geobacter metallireducens: features of metabolism, physiology and regulation common and dissimilar to Geobacter sulfurreducens.</title>
        <authorList>
            <person name="Aklujkar M."/>
            <person name="Krushkal J."/>
            <person name="DiBartolo G."/>
            <person name="Lapidus A."/>
            <person name="Land M.L."/>
            <person name="Lovley D.R."/>
        </authorList>
    </citation>
    <scope>NUCLEOTIDE SEQUENCE [LARGE SCALE GENOMIC DNA]</scope>
    <source>
        <strain>ATCC 53774 / DSM 7210 / GS-15</strain>
    </source>
</reference>
<name>MNME_GEOMG</name>